<comment type="function">
    <text evidence="1">One of the primary rRNA binding proteins, it binds directly to 16S rRNA where it nucleates assembly of the head domain of the 30S subunit.</text>
</comment>
<comment type="subunit">
    <text>Part of the 30S ribosomal subunit.</text>
</comment>
<comment type="subcellular location">
    <subcellularLocation>
        <location>Plastid</location>
        <location>Chloroplast</location>
    </subcellularLocation>
</comment>
<comment type="similarity">
    <text evidence="2">Belongs to the universal ribosomal protein uS7 family.</text>
</comment>
<reference key="1">
    <citation type="journal article" date="1997" name="Proc. Natl. Acad. Sci. U.S.A.">
        <title>Complete nucleotide sequence of the chloroplast genome from the green alga Chlorella vulgaris: the existence of genes possibly involved in chloroplast division.</title>
        <authorList>
            <person name="Wakasugi T."/>
            <person name="Nagai T."/>
            <person name="Kapoor M."/>
            <person name="Sugita M."/>
            <person name="Ito M."/>
            <person name="Ito S."/>
            <person name="Tsudzuki J."/>
            <person name="Nakashima K."/>
            <person name="Tsudzuki T."/>
            <person name="Suzuki Y."/>
            <person name="Hamada A."/>
            <person name="Ohta T."/>
            <person name="Inamura A."/>
            <person name="Yoshinaga K."/>
            <person name="Sugiura M."/>
        </authorList>
    </citation>
    <scope>NUCLEOTIDE SEQUENCE [LARGE SCALE GENOMIC DNA]</scope>
    <source>
        <strain>IAM C-27 / Tamiya</strain>
    </source>
</reference>
<feature type="chain" id="PRO_0000124444" description="Small ribosomal subunit protein uS7c">
    <location>
        <begin position="1"/>
        <end position="156"/>
    </location>
</feature>
<protein>
    <recommendedName>
        <fullName evidence="2">Small ribosomal subunit protein uS7c</fullName>
    </recommendedName>
    <alternativeName>
        <fullName>30S ribosomal protein S7, chloroplastic</fullName>
    </alternativeName>
</protein>
<gene>
    <name type="primary">rps7</name>
</gene>
<organism>
    <name type="scientific">Chlorella vulgaris</name>
    <name type="common">Green alga</name>
    <dbReference type="NCBI Taxonomy" id="3077"/>
    <lineage>
        <taxon>Eukaryota</taxon>
        <taxon>Viridiplantae</taxon>
        <taxon>Chlorophyta</taxon>
        <taxon>core chlorophytes</taxon>
        <taxon>Trebouxiophyceae</taxon>
        <taxon>Chlorellales</taxon>
        <taxon>Chlorellaceae</taxon>
        <taxon>Chlorella clade</taxon>
        <taxon>Chlorella</taxon>
    </lineage>
</organism>
<geneLocation type="chloroplast"/>
<name>RR7_CHLVU</name>
<dbReference type="EMBL" id="AB001684">
    <property type="protein sequence ID" value="BAA57885.1"/>
    <property type="molecule type" value="Genomic_DNA"/>
</dbReference>
<dbReference type="PIR" id="T07238">
    <property type="entry name" value="T07238"/>
</dbReference>
<dbReference type="RefSeq" id="NP_045810.1">
    <property type="nucleotide sequence ID" value="NC_001865.1"/>
</dbReference>
<dbReference type="SMR" id="P56355"/>
<dbReference type="GeneID" id="809105"/>
<dbReference type="GO" id="GO:0009507">
    <property type="term" value="C:chloroplast"/>
    <property type="evidence" value="ECO:0007669"/>
    <property type="project" value="UniProtKB-SubCell"/>
</dbReference>
<dbReference type="GO" id="GO:0015935">
    <property type="term" value="C:small ribosomal subunit"/>
    <property type="evidence" value="ECO:0007669"/>
    <property type="project" value="InterPro"/>
</dbReference>
<dbReference type="GO" id="GO:0019843">
    <property type="term" value="F:rRNA binding"/>
    <property type="evidence" value="ECO:0007669"/>
    <property type="project" value="UniProtKB-UniRule"/>
</dbReference>
<dbReference type="GO" id="GO:0003735">
    <property type="term" value="F:structural constituent of ribosome"/>
    <property type="evidence" value="ECO:0007669"/>
    <property type="project" value="InterPro"/>
</dbReference>
<dbReference type="GO" id="GO:0006412">
    <property type="term" value="P:translation"/>
    <property type="evidence" value="ECO:0007669"/>
    <property type="project" value="UniProtKB-UniRule"/>
</dbReference>
<dbReference type="CDD" id="cd14871">
    <property type="entry name" value="uS7_Chloroplast"/>
    <property type="match status" value="1"/>
</dbReference>
<dbReference type="FunFam" id="1.10.455.10:FF:000001">
    <property type="entry name" value="30S ribosomal protein S7"/>
    <property type="match status" value="1"/>
</dbReference>
<dbReference type="Gene3D" id="1.10.455.10">
    <property type="entry name" value="Ribosomal protein S7 domain"/>
    <property type="match status" value="1"/>
</dbReference>
<dbReference type="HAMAP" id="MF_00480_B">
    <property type="entry name" value="Ribosomal_uS7_B"/>
    <property type="match status" value="1"/>
</dbReference>
<dbReference type="InterPro" id="IPR000235">
    <property type="entry name" value="Ribosomal_uS7"/>
</dbReference>
<dbReference type="InterPro" id="IPR005717">
    <property type="entry name" value="Ribosomal_uS7_bac/org-type"/>
</dbReference>
<dbReference type="InterPro" id="IPR020606">
    <property type="entry name" value="Ribosomal_uS7_CS"/>
</dbReference>
<dbReference type="InterPro" id="IPR023798">
    <property type="entry name" value="Ribosomal_uS7_dom"/>
</dbReference>
<dbReference type="InterPro" id="IPR036823">
    <property type="entry name" value="Ribosomal_uS7_dom_sf"/>
</dbReference>
<dbReference type="NCBIfam" id="TIGR01029">
    <property type="entry name" value="rpsG_bact"/>
    <property type="match status" value="1"/>
</dbReference>
<dbReference type="PANTHER" id="PTHR11205">
    <property type="entry name" value="RIBOSOMAL PROTEIN S7"/>
    <property type="match status" value="1"/>
</dbReference>
<dbReference type="Pfam" id="PF00177">
    <property type="entry name" value="Ribosomal_S7"/>
    <property type="match status" value="1"/>
</dbReference>
<dbReference type="PIRSF" id="PIRSF002122">
    <property type="entry name" value="RPS7p_RPS7a_RPS5e_RPS7o"/>
    <property type="match status" value="1"/>
</dbReference>
<dbReference type="SUPFAM" id="SSF47973">
    <property type="entry name" value="Ribosomal protein S7"/>
    <property type="match status" value="1"/>
</dbReference>
<dbReference type="PROSITE" id="PS00052">
    <property type="entry name" value="RIBOSOMAL_S7"/>
    <property type="match status" value="1"/>
</dbReference>
<keyword id="KW-0150">Chloroplast</keyword>
<keyword id="KW-0934">Plastid</keyword>
<keyword id="KW-0687">Ribonucleoprotein</keyword>
<keyword id="KW-0689">Ribosomal protein</keyword>
<keyword id="KW-0694">RNA-binding</keyword>
<keyword id="KW-0699">rRNA-binding</keyword>
<evidence type="ECO:0000250" key="1"/>
<evidence type="ECO:0000305" key="2"/>
<proteinExistence type="inferred from homology"/>
<accession>P56355</accession>
<sequence>MSRRRTQKKRIVMPDPVYDSRLVELLVRQLMREGKKSLAYRICYESMNRVADATQQDPLVIVEQAIRNATPLVEVKARRIGGSTYQVPLEVASERGTALAIRWILSVCRKKTGRPMAAKLTAELLDAAKNSGLAVRKRDEIHKMADANKAFAKYRF</sequence>